<protein>
    <recommendedName>
        <fullName evidence="1">Elongation factor Ts</fullName>
        <shortName evidence="1">EF-Ts</shortName>
    </recommendedName>
</protein>
<accession>B0K1P8</accession>
<reference key="1">
    <citation type="submission" date="2008-01" db="EMBL/GenBank/DDBJ databases">
        <title>Complete sequence of Thermoanaerobacter sp. X514.</title>
        <authorList>
            <consortium name="US DOE Joint Genome Institute"/>
            <person name="Copeland A."/>
            <person name="Lucas S."/>
            <person name="Lapidus A."/>
            <person name="Barry K."/>
            <person name="Glavina del Rio T."/>
            <person name="Dalin E."/>
            <person name="Tice H."/>
            <person name="Pitluck S."/>
            <person name="Bruce D."/>
            <person name="Goodwin L."/>
            <person name="Saunders E."/>
            <person name="Brettin T."/>
            <person name="Detter J.C."/>
            <person name="Han C."/>
            <person name="Schmutz J."/>
            <person name="Larimer F."/>
            <person name="Land M."/>
            <person name="Hauser L."/>
            <person name="Kyrpides N."/>
            <person name="Kim E."/>
            <person name="Hemme C."/>
            <person name="Fields M.W."/>
            <person name="He Z."/>
            <person name="Zhou J."/>
            <person name="Richardson P."/>
        </authorList>
    </citation>
    <scope>NUCLEOTIDE SEQUENCE [LARGE SCALE GENOMIC DNA]</scope>
    <source>
        <strain>X514</strain>
    </source>
</reference>
<feature type="chain" id="PRO_1000189892" description="Elongation factor Ts">
    <location>
        <begin position="1"/>
        <end position="204"/>
    </location>
</feature>
<feature type="region of interest" description="Involved in Mg(2+) ion dislocation from EF-Tu" evidence="1">
    <location>
        <begin position="80"/>
        <end position="83"/>
    </location>
</feature>
<proteinExistence type="inferred from homology"/>
<dbReference type="EMBL" id="CP000923">
    <property type="protein sequence ID" value="ABY92946.1"/>
    <property type="molecule type" value="Genomic_DNA"/>
</dbReference>
<dbReference type="RefSeq" id="WP_003866734.1">
    <property type="nucleotide sequence ID" value="NC_010320.1"/>
</dbReference>
<dbReference type="SMR" id="B0K1P8"/>
<dbReference type="KEGG" id="tex:Teth514_1660"/>
<dbReference type="HOGENOM" id="CLU_047155_1_1_9"/>
<dbReference type="Proteomes" id="UP000002155">
    <property type="component" value="Chromosome"/>
</dbReference>
<dbReference type="GO" id="GO:0005737">
    <property type="term" value="C:cytoplasm"/>
    <property type="evidence" value="ECO:0007669"/>
    <property type="project" value="UniProtKB-SubCell"/>
</dbReference>
<dbReference type="GO" id="GO:0003746">
    <property type="term" value="F:translation elongation factor activity"/>
    <property type="evidence" value="ECO:0007669"/>
    <property type="project" value="UniProtKB-UniRule"/>
</dbReference>
<dbReference type="CDD" id="cd14275">
    <property type="entry name" value="UBA_EF-Ts"/>
    <property type="match status" value="1"/>
</dbReference>
<dbReference type="FunFam" id="1.10.286.20:FF:000001">
    <property type="entry name" value="Elongation factor Ts"/>
    <property type="match status" value="1"/>
</dbReference>
<dbReference type="FunFam" id="1.10.8.10:FF:000001">
    <property type="entry name" value="Elongation factor Ts"/>
    <property type="match status" value="1"/>
</dbReference>
<dbReference type="Gene3D" id="1.10.286.20">
    <property type="match status" value="1"/>
</dbReference>
<dbReference type="Gene3D" id="1.10.8.10">
    <property type="entry name" value="DNA helicase RuvA subunit, C-terminal domain"/>
    <property type="match status" value="1"/>
</dbReference>
<dbReference type="Gene3D" id="3.30.479.20">
    <property type="entry name" value="Elongation factor Ts, dimerisation domain"/>
    <property type="match status" value="1"/>
</dbReference>
<dbReference type="HAMAP" id="MF_00050">
    <property type="entry name" value="EF_Ts"/>
    <property type="match status" value="1"/>
</dbReference>
<dbReference type="InterPro" id="IPR036402">
    <property type="entry name" value="EF-Ts_dimer_sf"/>
</dbReference>
<dbReference type="InterPro" id="IPR001816">
    <property type="entry name" value="Transl_elong_EFTs/EF1B"/>
</dbReference>
<dbReference type="InterPro" id="IPR014039">
    <property type="entry name" value="Transl_elong_EFTs/EF1B_dimer"/>
</dbReference>
<dbReference type="InterPro" id="IPR018101">
    <property type="entry name" value="Transl_elong_Ts_CS"/>
</dbReference>
<dbReference type="InterPro" id="IPR009060">
    <property type="entry name" value="UBA-like_sf"/>
</dbReference>
<dbReference type="NCBIfam" id="TIGR00116">
    <property type="entry name" value="tsf"/>
    <property type="match status" value="2"/>
</dbReference>
<dbReference type="PANTHER" id="PTHR11741">
    <property type="entry name" value="ELONGATION FACTOR TS"/>
    <property type="match status" value="1"/>
</dbReference>
<dbReference type="PANTHER" id="PTHR11741:SF0">
    <property type="entry name" value="ELONGATION FACTOR TS, MITOCHONDRIAL"/>
    <property type="match status" value="1"/>
</dbReference>
<dbReference type="Pfam" id="PF00889">
    <property type="entry name" value="EF_TS"/>
    <property type="match status" value="1"/>
</dbReference>
<dbReference type="SUPFAM" id="SSF54713">
    <property type="entry name" value="Elongation factor Ts (EF-Ts), dimerisation domain"/>
    <property type="match status" value="1"/>
</dbReference>
<dbReference type="SUPFAM" id="SSF46934">
    <property type="entry name" value="UBA-like"/>
    <property type="match status" value="1"/>
</dbReference>
<dbReference type="PROSITE" id="PS01126">
    <property type="entry name" value="EF_TS_1"/>
    <property type="match status" value="1"/>
</dbReference>
<dbReference type="PROSITE" id="PS01127">
    <property type="entry name" value="EF_TS_2"/>
    <property type="match status" value="1"/>
</dbReference>
<keyword id="KW-0963">Cytoplasm</keyword>
<keyword id="KW-0251">Elongation factor</keyword>
<keyword id="KW-0648">Protein biosynthesis</keyword>
<name>EFTS_THEPX</name>
<comment type="function">
    <text evidence="1">Associates with the EF-Tu.GDP complex and induces the exchange of GDP to GTP. It remains bound to the aminoacyl-tRNA.EF-Tu.GTP complex up to the GTP hydrolysis stage on the ribosome.</text>
</comment>
<comment type="subcellular location">
    <subcellularLocation>
        <location evidence="1">Cytoplasm</location>
    </subcellularLocation>
</comment>
<comment type="similarity">
    <text evidence="1">Belongs to the EF-Ts family.</text>
</comment>
<gene>
    <name evidence="1" type="primary">tsf</name>
    <name type="ordered locus">Teth514_1660</name>
</gene>
<evidence type="ECO:0000255" key="1">
    <source>
        <dbReference type="HAMAP-Rule" id="MF_00050"/>
    </source>
</evidence>
<sequence length="204" mass="22862">MISAQAVKELRERTGAGMMDCKKALMEANGDMEKAIDILREKGLAAAAKKAGRVANEGLVDAYIHSGGRIGVLVEVNCETDFVANTDEFKNFVKEICMQIAAANPKYISREDVPQAVLEKEREILKAQALNEGKPQNVVDRIVEGRIEKFYKENCLLEQEYIRDPEKTVKDLLNETIAKLGENIVIRRFVRFERGEGIETSSNE</sequence>
<organism>
    <name type="scientific">Thermoanaerobacter sp. (strain X514)</name>
    <dbReference type="NCBI Taxonomy" id="399726"/>
    <lineage>
        <taxon>Bacteria</taxon>
        <taxon>Bacillati</taxon>
        <taxon>Bacillota</taxon>
        <taxon>Clostridia</taxon>
        <taxon>Thermoanaerobacterales</taxon>
        <taxon>Thermoanaerobacteraceae</taxon>
        <taxon>Thermoanaerobacter</taxon>
    </lineage>
</organism>